<dbReference type="EMBL" id="CP001396">
    <property type="protein sequence ID" value="ACR62426.1"/>
    <property type="molecule type" value="Genomic_DNA"/>
</dbReference>
<dbReference type="RefSeq" id="WP_001240896.1">
    <property type="nucleotide sequence ID" value="NC_012759.1"/>
</dbReference>
<dbReference type="SMR" id="C4ZRR9"/>
<dbReference type="GeneID" id="93777248"/>
<dbReference type="KEGG" id="ebw:BWG_0169"/>
<dbReference type="HOGENOM" id="CLU_007664_1_0_6"/>
<dbReference type="GO" id="GO:1990063">
    <property type="term" value="C:Bam protein complex"/>
    <property type="evidence" value="ECO:0007669"/>
    <property type="project" value="TreeGrafter"/>
</dbReference>
<dbReference type="GO" id="GO:0043165">
    <property type="term" value="P:Gram-negative-bacterium-type cell outer membrane assembly"/>
    <property type="evidence" value="ECO:0007669"/>
    <property type="project" value="UniProtKB-UniRule"/>
</dbReference>
<dbReference type="GO" id="GO:0051205">
    <property type="term" value="P:protein insertion into membrane"/>
    <property type="evidence" value="ECO:0007669"/>
    <property type="project" value="UniProtKB-UniRule"/>
</dbReference>
<dbReference type="FunFam" id="2.40.160.50:FF:000001">
    <property type="entry name" value="Outer membrane protein assembly factor BamA"/>
    <property type="match status" value="1"/>
</dbReference>
<dbReference type="FunFam" id="3.10.20.310:FF:000001">
    <property type="entry name" value="Outer membrane protein assembly factor BamA"/>
    <property type="match status" value="1"/>
</dbReference>
<dbReference type="FunFam" id="3.10.20.310:FF:000002">
    <property type="entry name" value="Outer membrane protein assembly factor BamA"/>
    <property type="match status" value="1"/>
</dbReference>
<dbReference type="FunFam" id="3.10.20.310:FF:000003">
    <property type="entry name" value="Outer membrane protein assembly factor BamA"/>
    <property type="match status" value="1"/>
</dbReference>
<dbReference type="FunFam" id="3.10.20.310:FF:000004">
    <property type="entry name" value="Outer membrane protein assembly factor BamA"/>
    <property type="match status" value="1"/>
</dbReference>
<dbReference type="FunFam" id="3.10.20.310:FF:000005">
    <property type="entry name" value="Outer membrane protein assembly factor BamA"/>
    <property type="match status" value="1"/>
</dbReference>
<dbReference type="Gene3D" id="3.10.20.310">
    <property type="entry name" value="membrane protein fhac"/>
    <property type="match status" value="5"/>
</dbReference>
<dbReference type="Gene3D" id="2.40.160.50">
    <property type="entry name" value="membrane protein fhac: a member of the omp85/tpsb transporter family"/>
    <property type="match status" value="1"/>
</dbReference>
<dbReference type="HAMAP" id="MF_01430">
    <property type="entry name" value="OM_assembly_BamA"/>
    <property type="match status" value="1"/>
</dbReference>
<dbReference type="InterPro" id="IPR000184">
    <property type="entry name" value="Bac_surfAg_D15"/>
</dbReference>
<dbReference type="InterPro" id="IPR010827">
    <property type="entry name" value="BamA/TamA_POTRA"/>
</dbReference>
<dbReference type="InterPro" id="IPR039910">
    <property type="entry name" value="D15-like"/>
</dbReference>
<dbReference type="InterPro" id="IPR023707">
    <property type="entry name" value="OM_assembly_BamA"/>
</dbReference>
<dbReference type="InterPro" id="IPR034746">
    <property type="entry name" value="POTRA"/>
</dbReference>
<dbReference type="NCBIfam" id="TIGR03303">
    <property type="entry name" value="OM_YaeT"/>
    <property type="match status" value="1"/>
</dbReference>
<dbReference type="NCBIfam" id="NF008287">
    <property type="entry name" value="PRK11067.1"/>
    <property type="match status" value="1"/>
</dbReference>
<dbReference type="PANTHER" id="PTHR12815:SF23">
    <property type="entry name" value="OUTER MEMBRANE PROTEIN ASSEMBLY FACTOR BAMA"/>
    <property type="match status" value="1"/>
</dbReference>
<dbReference type="PANTHER" id="PTHR12815">
    <property type="entry name" value="SORTING AND ASSEMBLY MACHINERY SAMM50 PROTEIN FAMILY MEMBER"/>
    <property type="match status" value="1"/>
</dbReference>
<dbReference type="Pfam" id="PF01103">
    <property type="entry name" value="Omp85"/>
    <property type="match status" value="1"/>
</dbReference>
<dbReference type="Pfam" id="PF07244">
    <property type="entry name" value="POTRA"/>
    <property type="match status" value="4"/>
</dbReference>
<dbReference type="PIRSF" id="PIRSF006076">
    <property type="entry name" value="OM_assembly_OMP85"/>
    <property type="match status" value="1"/>
</dbReference>
<dbReference type="PROSITE" id="PS51779">
    <property type="entry name" value="POTRA"/>
    <property type="match status" value="5"/>
</dbReference>
<organism>
    <name type="scientific">Escherichia coli (strain K12 / MC4100 / BW2952)</name>
    <dbReference type="NCBI Taxonomy" id="595496"/>
    <lineage>
        <taxon>Bacteria</taxon>
        <taxon>Pseudomonadati</taxon>
        <taxon>Pseudomonadota</taxon>
        <taxon>Gammaproteobacteria</taxon>
        <taxon>Enterobacterales</taxon>
        <taxon>Enterobacteriaceae</taxon>
        <taxon>Escherichia</taxon>
    </lineage>
</organism>
<evidence type="ECO:0000255" key="1">
    <source>
        <dbReference type="HAMAP-Rule" id="MF_01430"/>
    </source>
</evidence>
<evidence type="ECO:0000255" key="2">
    <source>
        <dbReference type="PROSITE-ProRule" id="PRU01115"/>
    </source>
</evidence>
<proteinExistence type="inferred from homology"/>
<accession>C4ZRR9</accession>
<gene>
    <name evidence="1" type="primary">bamA</name>
    <name type="synonym">yaeT</name>
    <name type="ordered locus">BWG_0169</name>
</gene>
<feature type="signal peptide" evidence="1">
    <location>
        <begin position="1"/>
        <end position="20"/>
    </location>
</feature>
<feature type="chain" id="PRO_1000215274" description="Outer membrane protein assembly factor BamA">
    <location>
        <begin position="21"/>
        <end position="810"/>
    </location>
</feature>
<feature type="domain" description="POTRA 1" evidence="2">
    <location>
        <begin position="24"/>
        <end position="91"/>
    </location>
</feature>
<feature type="domain" description="POTRA 2" evidence="2">
    <location>
        <begin position="92"/>
        <end position="172"/>
    </location>
</feature>
<feature type="domain" description="POTRA 3" evidence="2">
    <location>
        <begin position="175"/>
        <end position="263"/>
    </location>
</feature>
<feature type="domain" description="POTRA 4" evidence="2">
    <location>
        <begin position="266"/>
        <end position="344"/>
    </location>
</feature>
<feature type="domain" description="POTRA 5" evidence="2">
    <location>
        <begin position="347"/>
        <end position="421"/>
    </location>
</feature>
<name>BAMA_ECOBW</name>
<comment type="function">
    <text evidence="1">Part of the outer membrane protein assembly complex, which is involved in assembly and insertion of beta-barrel proteins into the outer membrane. Constitutes, with BamD, the core component of the assembly machinery.</text>
</comment>
<comment type="subunit">
    <text evidence="1">Part of the Bam complex, which is composed of the outer membrane protein BamA, and four lipoproteins BamB, BamC, BamD and BamE.</text>
</comment>
<comment type="subcellular location">
    <subcellularLocation>
        <location evidence="1">Cell outer membrane</location>
    </subcellularLocation>
</comment>
<comment type="similarity">
    <text evidence="1">Belongs to the BamA family.</text>
</comment>
<reference key="1">
    <citation type="journal article" date="2009" name="J. Bacteriol.">
        <title>Genomic sequencing reveals regulatory mutations and recombinational events in the widely used MC4100 lineage of Escherichia coli K-12.</title>
        <authorList>
            <person name="Ferenci T."/>
            <person name="Zhou Z."/>
            <person name="Betteridge T."/>
            <person name="Ren Y."/>
            <person name="Liu Y."/>
            <person name="Feng L."/>
            <person name="Reeves P.R."/>
            <person name="Wang L."/>
        </authorList>
    </citation>
    <scope>NUCLEOTIDE SEQUENCE [LARGE SCALE GENOMIC DNA]</scope>
    <source>
        <strain>K12 / MC4100 / BW2952</strain>
    </source>
</reference>
<keyword id="KW-0998">Cell outer membrane</keyword>
<keyword id="KW-0472">Membrane</keyword>
<keyword id="KW-0677">Repeat</keyword>
<keyword id="KW-0732">Signal</keyword>
<keyword id="KW-0812">Transmembrane</keyword>
<keyword id="KW-1134">Transmembrane beta strand</keyword>
<sequence>MAMKKLLIASLLFSSATVYGAEGFVVKDIHFEGLQRVAVGAALLSMPVRTGDTVNDEDISNTIRALFATGNFEDVRVLRDGDTLLVQVKERPTIASITFSGNKSVKDDMLKQNLEASGVRVGESLDRTTIADIEKGLEDFYYSVGKYSASVKAVVTPLPRNRVDLKLVFQEGVSAEIQQINIVGNHAFTTDELISHFQLRDEVPWWNVVGDRKYQKQKLAGDLETLRSYYLDRGYARFNIDSTQVSLTPDKKGIYVTVNITEGDQYKLSGVEVSGNLAGHSAEIEQLTKIEPGELYNGTKVTKMEDDIKKLLGRYGYAYPRVQSMPEINDADKTVKLRVNVDAGNRFYVRKIRFEGNDTSKDAVLRREMRQMEGAWLGSDLVDQGKERLNRLGFFETVDTDTQRVPGSPDQVDVVYKVKERNTGSFNFGIGYGTESGVSFQAGVQQDNWLGTGYAVGINGTKNDYQTYAELSVTNPYFTVDGVSLGGRLFYNDFQADDADLSDYTNKSYGTDVTLGFPINEYNSLRAGLGYVHNSLSNMQPQVAMWRYLYSMGEHPSTSDQDNSFKTDDFTFNYGWTYNKLDRGYFPTDGSRVNLTGKVTIPGSDNEYYKVTLDTATYVPIDDDHKWVVLGRTRWGYGDGLGGKEMPFYENFYAGGSSTVRGFQSNTIGPKAVYFPHQASNYDPDYDYECATQDGAKDLCKSDDAVGGNAMAVASLEFITPTPFISDKYANSVRTSFFWDMGTVWDTNWDSSQYSGYPDYSDPSNIRMSAGIALQWMSPLGPLVFSYAQPFKKYDGDKAEQFQFNIGKTW</sequence>
<protein>
    <recommendedName>
        <fullName evidence="1">Outer membrane protein assembly factor BamA</fullName>
    </recommendedName>
</protein>